<feature type="chain" id="PRO_0000180467" description="Double-strand-specific pac1 ribonuclease">
    <location>
        <begin position="1"/>
        <end position="363"/>
    </location>
</feature>
<feature type="domain" description="RNase III" evidence="1">
    <location>
        <begin position="139"/>
        <end position="262"/>
    </location>
</feature>
<feature type="domain" description="DRBM" evidence="2">
    <location>
        <begin position="285"/>
        <end position="356"/>
    </location>
</feature>
<feature type="region of interest" description="Disordered" evidence="3">
    <location>
        <begin position="1"/>
        <end position="35"/>
    </location>
</feature>
<feature type="region of interest" description="Disordered" evidence="3">
    <location>
        <begin position="92"/>
        <end position="138"/>
    </location>
</feature>
<feature type="compositionally biased region" description="Low complexity" evidence="3">
    <location>
        <begin position="13"/>
        <end position="22"/>
    </location>
</feature>
<feature type="compositionally biased region" description="Basic residues" evidence="3">
    <location>
        <begin position="24"/>
        <end position="35"/>
    </location>
</feature>
<feature type="modified residue" description="Phosphoserine" evidence="4">
    <location>
        <position position="122"/>
    </location>
</feature>
<feature type="mutagenesis site" description="In snm1-1 and ran1-114; loss of activity." evidence="6">
    <original>G</original>
    <variation>D</variation>
    <variation>S</variation>
    <location>
        <position position="178"/>
    </location>
</feature>
<feature type="sequence conflict" description="In Ref. 4; AAU05314/AAU05315." evidence="8" ref="4">
    <original>E</original>
    <variation>K</variation>
    <location>
        <position position="144"/>
    </location>
</feature>
<accession>P22192</accession>
<accession>Q4JFF8</accession>
<accession>Q670L9</accession>
<gene>
    <name type="primary">pac1</name>
    <name type="synonym">hcs</name>
    <name type="ORF">SPBC119.11c</name>
</gene>
<comment type="function">
    <text evidence="5">Digests double-stranded RNA. Converts long double-stranded RNAs into short oligonucleotides, leaving 5'-phosphates on their cleavage products. Probably inhibits mating and meiosis by degrading a specific mRNA required for sexual development.</text>
</comment>
<comment type="catalytic activity">
    <reaction>
        <text>Endonucleolytic cleavage to 5'-phosphomonoester.</text>
        <dbReference type="EC" id="3.1.26.3"/>
    </reaction>
</comment>
<comment type="cofactor">
    <cofactor evidence="7">
        <name>Mg(2+)</name>
        <dbReference type="ChEBI" id="CHEBI:18420"/>
    </cofactor>
</comment>
<comment type="biophysicochemical properties">
    <phDependence>
        <text evidence="7">Optimum pH is 8.5. No activity at pH below 6.5 or above 9.5.</text>
    </phDependence>
</comment>
<evidence type="ECO:0000255" key="1">
    <source>
        <dbReference type="PROSITE-ProRule" id="PRU00177"/>
    </source>
</evidence>
<evidence type="ECO:0000255" key="2">
    <source>
        <dbReference type="PROSITE-ProRule" id="PRU00266"/>
    </source>
</evidence>
<evidence type="ECO:0000256" key="3">
    <source>
        <dbReference type="SAM" id="MobiDB-lite"/>
    </source>
</evidence>
<evidence type="ECO:0000269" key="4">
    <source>
    </source>
</evidence>
<evidence type="ECO:0000269" key="5">
    <source>
    </source>
</evidence>
<evidence type="ECO:0000269" key="6">
    <source>
    </source>
</evidence>
<evidence type="ECO:0000269" key="7">
    <source>
    </source>
</evidence>
<evidence type="ECO:0000305" key="8"/>
<protein>
    <recommendedName>
        <fullName>Double-strand-specific pac1 ribonuclease</fullName>
        <ecNumber>3.1.26.3</ecNumber>
    </recommendedName>
    <alternativeName>
        <fullName>Protein hcs</fullName>
    </alternativeName>
</protein>
<organism>
    <name type="scientific">Schizosaccharomyces pombe (strain 972 / ATCC 24843)</name>
    <name type="common">Fission yeast</name>
    <dbReference type="NCBI Taxonomy" id="284812"/>
    <lineage>
        <taxon>Eukaryota</taxon>
        <taxon>Fungi</taxon>
        <taxon>Dikarya</taxon>
        <taxon>Ascomycota</taxon>
        <taxon>Taphrinomycotina</taxon>
        <taxon>Schizosaccharomycetes</taxon>
        <taxon>Schizosaccharomycetales</taxon>
        <taxon>Schizosaccharomycetaceae</taxon>
        <taxon>Schizosaccharomyces</taxon>
    </lineage>
</organism>
<dbReference type="EC" id="3.1.26.3"/>
<dbReference type="EMBL" id="X54998">
    <property type="protein sequence ID" value="CAA38745.1"/>
    <property type="molecule type" value="Genomic_DNA"/>
</dbReference>
<dbReference type="EMBL" id="X53769">
    <property type="protein sequence ID" value="CAJ14141.1"/>
    <property type="molecule type" value="Genomic_DNA"/>
</dbReference>
<dbReference type="EMBL" id="S78982">
    <property type="protein sequence ID" value="AAB34897.1"/>
    <property type="molecule type" value="Genomic_DNA"/>
</dbReference>
<dbReference type="EMBL" id="AY695821">
    <property type="protein sequence ID" value="AAU05314.1"/>
    <property type="molecule type" value="Genomic_DNA"/>
</dbReference>
<dbReference type="EMBL" id="AY695822">
    <property type="protein sequence ID" value="AAU05315.1"/>
    <property type="molecule type" value="Genomic_DNA"/>
</dbReference>
<dbReference type="EMBL" id="CU329671">
    <property type="protein sequence ID" value="CAA17926.1"/>
    <property type="molecule type" value="Genomic_DNA"/>
</dbReference>
<dbReference type="PIR" id="S12605">
    <property type="entry name" value="S12605"/>
</dbReference>
<dbReference type="RefSeq" id="NP_595292.1">
    <property type="nucleotide sequence ID" value="NM_001021199.2"/>
</dbReference>
<dbReference type="SMR" id="P22192"/>
<dbReference type="BioGRID" id="276622">
    <property type="interactions" value="3"/>
</dbReference>
<dbReference type="FunCoup" id="P22192">
    <property type="interactions" value="297"/>
</dbReference>
<dbReference type="STRING" id="284812.P22192"/>
<dbReference type="iPTMnet" id="P22192"/>
<dbReference type="PaxDb" id="4896-SPBC119.11c.1"/>
<dbReference type="EnsemblFungi" id="SPBC119.11c.1">
    <property type="protein sequence ID" value="SPBC119.11c.1:pep"/>
    <property type="gene ID" value="SPBC119.11c"/>
</dbReference>
<dbReference type="GeneID" id="2540084"/>
<dbReference type="KEGG" id="spo:2540084"/>
<dbReference type="PomBase" id="SPBC119.11c">
    <property type="gene designation" value="pac1"/>
</dbReference>
<dbReference type="VEuPathDB" id="FungiDB:SPBC119.11c"/>
<dbReference type="eggNOG" id="KOG1817">
    <property type="taxonomic scope" value="Eukaryota"/>
</dbReference>
<dbReference type="HOGENOM" id="CLU_062290_0_0_1"/>
<dbReference type="InParanoid" id="P22192"/>
<dbReference type="OMA" id="RAWGANQ"/>
<dbReference type="PhylomeDB" id="P22192"/>
<dbReference type="PRO" id="PR:P22192"/>
<dbReference type="Proteomes" id="UP000002485">
    <property type="component" value="Chromosome II"/>
</dbReference>
<dbReference type="GO" id="GO:0005730">
    <property type="term" value="C:nucleolus"/>
    <property type="evidence" value="ECO:0000266"/>
    <property type="project" value="PomBase"/>
</dbReference>
<dbReference type="GO" id="GO:0005654">
    <property type="term" value="C:nucleoplasm"/>
    <property type="evidence" value="ECO:0000318"/>
    <property type="project" value="GO_Central"/>
</dbReference>
<dbReference type="GO" id="GO:0005634">
    <property type="term" value="C:nucleus"/>
    <property type="evidence" value="ECO:0000314"/>
    <property type="project" value="PomBase"/>
</dbReference>
<dbReference type="GO" id="GO:0003725">
    <property type="term" value="F:double-stranded RNA binding"/>
    <property type="evidence" value="ECO:0000314"/>
    <property type="project" value="PomBase"/>
</dbReference>
<dbReference type="GO" id="GO:0032296">
    <property type="term" value="F:double-stranded RNA-specific ribonuclease activity"/>
    <property type="evidence" value="ECO:0000314"/>
    <property type="project" value="PomBase"/>
</dbReference>
<dbReference type="GO" id="GO:0046872">
    <property type="term" value="F:metal ion binding"/>
    <property type="evidence" value="ECO:0007669"/>
    <property type="project" value="UniProtKB-KW"/>
</dbReference>
<dbReference type="GO" id="GO:0000182">
    <property type="term" value="F:rDNA binding"/>
    <property type="evidence" value="ECO:0000314"/>
    <property type="project" value="PomBase"/>
</dbReference>
<dbReference type="GO" id="GO:0004525">
    <property type="term" value="F:ribonuclease III activity"/>
    <property type="evidence" value="ECO:0000314"/>
    <property type="project" value="PomBase"/>
</dbReference>
<dbReference type="GO" id="GO:0035613">
    <property type="term" value="F:RNA stem-loop binding"/>
    <property type="evidence" value="ECO:0000314"/>
    <property type="project" value="PomBase"/>
</dbReference>
<dbReference type="GO" id="GO:0106410">
    <property type="term" value="P:box C/D sno(s)RNA 5'-end processing"/>
    <property type="evidence" value="ECO:0000315"/>
    <property type="project" value="PomBase"/>
</dbReference>
<dbReference type="GO" id="GO:0051321">
    <property type="term" value="P:meiotic cell cycle"/>
    <property type="evidence" value="ECO:0007669"/>
    <property type="project" value="UniProtKB-KW"/>
</dbReference>
<dbReference type="GO" id="GO:0000956">
    <property type="term" value="P:nuclear-transcribed mRNA catabolic process"/>
    <property type="evidence" value="ECO:0000315"/>
    <property type="project" value="PomBase"/>
</dbReference>
<dbReference type="GO" id="GO:0016070">
    <property type="term" value="P:RNA metabolic process"/>
    <property type="evidence" value="ECO:0000314"/>
    <property type="project" value="PomBase"/>
</dbReference>
<dbReference type="GO" id="GO:0006364">
    <property type="term" value="P:rRNA processing"/>
    <property type="evidence" value="ECO:0000314"/>
    <property type="project" value="PomBase"/>
</dbReference>
<dbReference type="GO" id="GO:0006369">
    <property type="term" value="P:termination of RNA polymerase II transcription"/>
    <property type="evidence" value="ECO:0000318"/>
    <property type="project" value="GO_Central"/>
</dbReference>
<dbReference type="GO" id="GO:0030847">
    <property type="term" value="P:termination of RNA polymerase II transcription, exosome-dependent"/>
    <property type="evidence" value="ECO:0000315"/>
    <property type="project" value="PomBase"/>
</dbReference>
<dbReference type="GO" id="GO:0034474">
    <property type="term" value="P:U2 snRNA 3'-end processing"/>
    <property type="evidence" value="ECO:0000314"/>
    <property type="project" value="PomBase"/>
</dbReference>
<dbReference type="GO" id="GO:0034475">
    <property type="term" value="P:U4 snRNA 3'-end processing"/>
    <property type="evidence" value="ECO:0000315"/>
    <property type="project" value="PomBase"/>
</dbReference>
<dbReference type="CDD" id="cd19876">
    <property type="entry name" value="DSRM_RNT1p-like"/>
    <property type="match status" value="1"/>
</dbReference>
<dbReference type="CDD" id="cd00593">
    <property type="entry name" value="RIBOc"/>
    <property type="match status" value="1"/>
</dbReference>
<dbReference type="FunFam" id="1.10.1520.10:FF:000001">
    <property type="entry name" value="Ribonuclease 3"/>
    <property type="match status" value="1"/>
</dbReference>
<dbReference type="Gene3D" id="3.30.160.20">
    <property type="match status" value="1"/>
</dbReference>
<dbReference type="Gene3D" id="1.10.1520.10">
    <property type="entry name" value="Ribonuclease III domain"/>
    <property type="match status" value="1"/>
</dbReference>
<dbReference type="InterPro" id="IPR014720">
    <property type="entry name" value="dsRBD_dom"/>
</dbReference>
<dbReference type="InterPro" id="IPR000999">
    <property type="entry name" value="RNase_III_dom"/>
</dbReference>
<dbReference type="InterPro" id="IPR036389">
    <property type="entry name" value="RNase_III_sf"/>
</dbReference>
<dbReference type="InterPro" id="IPR044449">
    <property type="entry name" value="Rnt1/Pac1_DSRM_fungi"/>
</dbReference>
<dbReference type="PANTHER" id="PTHR11207:SF0">
    <property type="entry name" value="RIBONUCLEASE 3"/>
    <property type="match status" value="1"/>
</dbReference>
<dbReference type="PANTHER" id="PTHR11207">
    <property type="entry name" value="RIBONUCLEASE III"/>
    <property type="match status" value="1"/>
</dbReference>
<dbReference type="Pfam" id="PF00035">
    <property type="entry name" value="dsrm"/>
    <property type="match status" value="1"/>
</dbReference>
<dbReference type="Pfam" id="PF00636">
    <property type="entry name" value="Ribonuclease_3"/>
    <property type="match status" value="1"/>
</dbReference>
<dbReference type="SMART" id="SM00358">
    <property type="entry name" value="DSRM"/>
    <property type="match status" value="1"/>
</dbReference>
<dbReference type="SMART" id="SM00535">
    <property type="entry name" value="RIBOc"/>
    <property type="match status" value="1"/>
</dbReference>
<dbReference type="SUPFAM" id="SSF54768">
    <property type="entry name" value="dsRNA-binding domain-like"/>
    <property type="match status" value="1"/>
</dbReference>
<dbReference type="SUPFAM" id="SSF69065">
    <property type="entry name" value="RNase III domain-like"/>
    <property type="match status" value="1"/>
</dbReference>
<dbReference type="PROSITE" id="PS50137">
    <property type="entry name" value="DS_RBD"/>
    <property type="match status" value="1"/>
</dbReference>
<dbReference type="PROSITE" id="PS00517">
    <property type="entry name" value="RNASE_3_1"/>
    <property type="match status" value="1"/>
</dbReference>
<dbReference type="PROSITE" id="PS50142">
    <property type="entry name" value="RNASE_3_2"/>
    <property type="match status" value="1"/>
</dbReference>
<reference key="1">
    <citation type="journal article" date="1991" name="EMBO J.">
        <title>S. pombe pac1+, whose overexpression inhibits sexual development, encodes a ribonuclease III-like RNase.</title>
        <authorList>
            <person name="Iino Y."/>
            <person name="Sugimoto A."/>
            <person name="Yamamoto M."/>
        </authorList>
    </citation>
    <scope>NUCLEOTIDE SEQUENCE [GENOMIC DNA]</scope>
    <scope>FUNCTION</scope>
</reference>
<reference key="2">
    <citation type="journal article" date="1990" name="Nucleic Acids Res.">
        <title>A gene from S. pombe with homology to E. coli RNase III blocks conjugation and sporulation when overexpressed in wild type cells.</title>
        <authorList>
            <person name="Xu H.-P."/>
            <person name="Riggs M."/>
            <person name="Rodgers L."/>
            <person name="Wigler M."/>
        </authorList>
    </citation>
    <scope>NUCLEOTIDE SEQUENCE [GENOMIC DNA]</scope>
</reference>
<reference key="3">
    <citation type="submission" date="2004-07" db="EMBL/GenBank/DDBJ databases">
        <title>Cloning, sequencing, prokaryotic expression and in vitro activity analysis of double-stranded RNA-specific nuclease gene from yeast.</title>
        <authorList>
            <person name="Zheng Y."/>
            <person name="Li S."/>
        </authorList>
    </citation>
    <scope>NUCLEOTIDE SEQUENCE [GENOMIC DNA]</scope>
    <source>
        <strain>2.1459</strain>
        <strain>2.274</strain>
    </source>
</reference>
<reference key="4">
    <citation type="journal article" date="1995" name="Mol. Gen. Genet.">
        <title>Rescue of the fission yeast snRNA synthesis mutant snm1 by overexpression of the double-strand-specific Pac1 ribonuclease.</title>
        <authorList>
            <person name="Rotondo G."/>
            <person name="Gillespie M."/>
            <person name="Frendewey D."/>
        </authorList>
    </citation>
    <scope>NUCLEOTIDE SEQUENCE [GENOMIC DNA]</scope>
    <scope>MUTAGENESIS OF GLY-178</scope>
</reference>
<reference key="5">
    <citation type="journal article" date="2002" name="Nature">
        <title>The genome sequence of Schizosaccharomyces pombe.</title>
        <authorList>
            <person name="Wood V."/>
            <person name="Gwilliam R."/>
            <person name="Rajandream M.A."/>
            <person name="Lyne M.H."/>
            <person name="Lyne R."/>
            <person name="Stewart A."/>
            <person name="Sgouros J.G."/>
            <person name="Peat N."/>
            <person name="Hayles J."/>
            <person name="Baker S.G."/>
            <person name="Basham D."/>
            <person name="Bowman S."/>
            <person name="Brooks K."/>
            <person name="Brown D."/>
            <person name="Brown S."/>
            <person name="Chillingworth T."/>
            <person name="Churcher C.M."/>
            <person name="Collins M."/>
            <person name="Connor R."/>
            <person name="Cronin A."/>
            <person name="Davis P."/>
            <person name="Feltwell T."/>
            <person name="Fraser A."/>
            <person name="Gentles S."/>
            <person name="Goble A."/>
            <person name="Hamlin N."/>
            <person name="Harris D.E."/>
            <person name="Hidalgo J."/>
            <person name="Hodgson G."/>
            <person name="Holroyd S."/>
            <person name="Hornsby T."/>
            <person name="Howarth S."/>
            <person name="Huckle E.J."/>
            <person name="Hunt S."/>
            <person name="Jagels K."/>
            <person name="James K.D."/>
            <person name="Jones L."/>
            <person name="Jones M."/>
            <person name="Leather S."/>
            <person name="McDonald S."/>
            <person name="McLean J."/>
            <person name="Mooney P."/>
            <person name="Moule S."/>
            <person name="Mungall K.L."/>
            <person name="Murphy L.D."/>
            <person name="Niblett D."/>
            <person name="Odell C."/>
            <person name="Oliver K."/>
            <person name="O'Neil S."/>
            <person name="Pearson D."/>
            <person name="Quail M.A."/>
            <person name="Rabbinowitsch E."/>
            <person name="Rutherford K.M."/>
            <person name="Rutter S."/>
            <person name="Saunders D."/>
            <person name="Seeger K."/>
            <person name="Sharp S."/>
            <person name="Skelton J."/>
            <person name="Simmonds M.N."/>
            <person name="Squares R."/>
            <person name="Squares S."/>
            <person name="Stevens K."/>
            <person name="Taylor K."/>
            <person name="Taylor R.G."/>
            <person name="Tivey A."/>
            <person name="Walsh S.V."/>
            <person name="Warren T."/>
            <person name="Whitehead S."/>
            <person name="Woodward J.R."/>
            <person name="Volckaert G."/>
            <person name="Aert R."/>
            <person name="Robben J."/>
            <person name="Grymonprez B."/>
            <person name="Weltjens I."/>
            <person name="Vanstreels E."/>
            <person name="Rieger M."/>
            <person name="Schaefer M."/>
            <person name="Mueller-Auer S."/>
            <person name="Gabel C."/>
            <person name="Fuchs M."/>
            <person name="Duesterhoeft A."/>
            <person name="Fritzc C."/>
            <person name="Holzer E."/>
            <person name="Moestl D."/>
            <person name="Hilbert H."/>
            <person name="Borzym K."/>
            <person name="Langer I."/>
            <person name="Beck A."/>
            <person name="Lehrach H."/>
            <person name="Reinhardt R."/>
            <person name="Pohl T.M."/>
            <person name="Eger P."/>
            <person name="Zimmermann W."/>
            <person name="Wedler H."/>
            <person name="Wambutt R."/>
            <person name="Purnelle B."/>
            <person name="Goffeau A."/>
            <person name="Cadieu E."/>
            <person name="Dreano S."/>
            <person name="Gloux S."/>
            <person name="Lelaure V."/>
            <person name="Mottier S."/>
            <person name="Galibert F."/>
            <person name="Aves S.J."/>
            <person name="Xiang Z."/>
            <person name="Hunt C."/>
            <person name="Moore K."/>
            <person name="Hurst S.M."/>
            <person name="Lucas M."/>
            <person name="Rochet M."/>
            <person name="Gaillardin C."/>
            <person name="Tallada V.A."/>
            <person name="Garzon A."/>
            <person name="Thode G."/>
            <person name="Daga R.R."/>
            <person name="Cruzado L."/>
            <person name="Jimenez J."/>
            <person name="Sanchez M."/>
            <person name="del Rey F."/>
            <person name="Benito J."/>
            <person name="Dominguez A."/>
            <person name="Revuelta J.L."/>
            <person name="Moreno S."/>
            <person name="Armstrong J."/>
            <person name="Forsburg S.L."/>
            <person name="Cerutti L."/>
            <person name="Lowe T."/>
            <person name="McCombie W.R."/>
            <person name="Paulsen I."/>
            <person name="Potashkin J."/>
            <person name="Shpakovski G.V."/>
            <person name="Ussery D."/>
            <person name="Barrell B.G."/>
            <person name="Nurse P."/>
        </authorList>
    </citation>
    <scope>NUCLEOTIDE SEQUENCE [LARGE SCALE GENOMIC DNA]</scope>
    <source>
        <strain>972 / ATCC 24843</strain>
    </source>
</reference>
<reference key="6">
    <citation type="journal article" date="1996" name="Nucleic Acids Res.">
        <title>Purification and characterization of the Pac1 ribonuclease of Schizosaccharomyces pombe.</title>
        <authorList>
            <person name="Rotondo G."/>
            <person name="Frendewey D."/>
        </authorList>
    </citation>
    <scope>COFACTOR</scope>
    <scope>BIOPHYSICOCHEMICAL PROPERTIES</scope>
</reference>
<reference key="7">
    <citation type="journal article" date="2008" name="J. Proteome Res.">
        <title>Phosphoproteome analysis of fission yeast.</title>
        <authorList>
            <person name="Wilson-Grady J.T."/>
            <person name="Villen J."/>
            <person name="Gygi S.P."/>
        </authorList>
    </citation>
    <scope>PHOSPHORYLATION [LARGE SCALE ANALYSIS] AT SER-122</scope>
    <scope>IDENTIFICATION BY MASS SPECTROMETRY</scope>
</reference>
<sequence>MGRFKRHHEGDSDSSSSASDSLSRGRRSLGHKRSSHIKNRQYYILEKKIRKLMFAMKALLEETKHSTKDDVNLVIPGSTWSHIEGVYEMLKSRHDRQNEPVIEEPSSHPKNQKNQENNEPTSEEFEEGEYPPPLPPLRSEKLKEQVFMHISRAYEIYPNQSNPNELLDIHNERLEFLGDSFFNLFTTRIIFSKFPQMDEGSLSKLRAKFVGNESADKFARLYGFDKTLVLSYSAEKDQLRKSQKVIADTFEAYLGALILDGQEETAFQWVSRLLQPKIANITVQRPIDKLAKSKLFHKYSTLGHIEYRWVDGAGGSAEGYVIACIFNGKEVARAWGANQKDAGSRAAMQALEVLAKDYSKFAR</sequence>
<keyword id="KW-0255">Endonuclease</keyword>
<keyword id="KW-0378">Hydrolase</keyword>
<keyword id="KW-0460">Magnesium</keyword>
<keyword id="KW-0469">Meiosis</keyword>
<keyword id="KW-0479">Metal-binding</keyword>
<keyword id="KW-0540">Nuclease</keyword>
<keyword id="KW-0597">Phosphoprotein</keyword>
<keyword id="KW-1185">Reference proteome</keyword>
<keyword id="KW-0694">RNA-binding</keyword>
<proteinExistence type="evidence at protein level"/>
<name>PAC1_SCHPO</name>